<keyword id="KW-0997">Cell inner membrane</keyword>
<keyword id="KW-1003">Cell membrane</keyword>
<keyword id="KW-0472">Membrane</keyword>
<keyword id="KW-0812">Transmembrane</keyword>
<keyword id="KW-1133">Transmembrane helix</keyword>
<organism>
    <name type="scientific">Escherichia coli (strain K12 / DH10B)</name>
    <dbReference type="NCBI Taxonomy" id="316385"/>
    <lineage>
        <taxon>Bacteria</taxon>
        <taxon>Pseudomonadati</taxon>
        <taxon>Pseudomonadota</taxon>
        <taxon>Gammaproteobacteria</taxon>
        <taxon>Enterobacterales</taxon>
        <taxon>Enterobacteriaceae</taxon>
        <taxon>Escherichia</taxon>
    </lineage>
</organism>
<accession>B1XDQ6</accession>
<dbReference type="EMBL" id="CP000948">
    <property type="protein sequence ID" value="ACB05143.1"/>
    <property type="molecule type" value="Genomic_DNA"/>
</dbReference>
<dbReference type="RefSeq" id="WP_000609663.1">
    <property type="nucleotide sequence ID" value="NC_010473.1"/>
</dbReference>
<dbReference type="SMR" id="B1XDQ6"/>
<dbReference type="GeneID" id="75169672"/>
<dbReference type="KEGG" id="ecd:ECDH10B_4346"/>
<dbReference type="HOGENOM" id="CLU_168367_0_0_6"/>
<dbReference type="GO" id="GO:0045283">
    <property type="term" value="C:fumarate reductase complex"/>
    <property type="evidence" value="ECO:0007669"/>
    <property type="project" value="UniProtKB-UniRule"/>
</dbReference>
<dbReference type="GO" id="GO:0005886">
    <property type="term" value="C:plasma membrane"/>
    <property type="evidence" value="ECO:0007669"/>
    <property type="project" value="UniProtKB-SubCell"/>
</dbReference>
<dbReference type="GO" id="GO:0000104">
    <property type="term" value="F:succinate dehydrogenase activity"/>
    <property type="evidence" value="ECO:0007669"/>
    <property type="project" value="UniProtKB-UniRule"/>
</dbReference>
<dbReference type="GO" id="GO:0006106">
    <property type="term" value="P:fumarate metabolic process"/>
    <property type="evidence" value="ECO:0007669"/>
    <property type="project" value="InterPro"/>
</dbReference>
<dbReference type="CDD" id="cd00547">
    <property type="entry name" value="QFR_TypeD_subunitD"/>
    <property type="match status" value="1"/>
</dbReference>
<dbReference type="FunFam" id="1.20.1300.10:FF:000002">
    <property type="entry name" value="Fumarate reductase subunit D"/>
    <property type="match status" value="1"/>
</dbReference>
<dbReference type="Gene3D" id="1.20.1300.10">
    <property type="entry name" value="Fumarate reductase/succinate dehydrogenase, transmembrane subunit"/>
    <property type="match status" value="1"/>
</dbReference>
<dbReference type="HAMAP" id="MF_00709">
    <property type="entry name" value="Fumarate_red_D"/>
    <property type="match status" value="1"/>
</dbReference>
<dbReference type="InterPro" id="IPR003418">
    <property type="entry name" value="Fumarate_red_D"/>
</dbReference>
<dbReference type="InterPro" id="IPR034804">
    <property type="entry name" value="SQR/QFR_C/D"/>
</dbReference>
<dbReference type="NCBIfam" id="NF003977">
    <property type="entry name" value="PRK05470.1-1"/>
    <property type="match status" value="1"/>
</dbReference>
<dbReference type="Pfam" id="PF02313">
    <property type="entry name" value="Fumarate_red_D"/>
    <property type="match status" value="1"/>
</dbReference>
<dbReference type="PIRSF" id="PIRSF000179">
    <property type="entry name" value="FrdD"/>
    <property type="match status" value="1"/>
</dbReference>
<dbReference type="SUPFAM" id="SSF81343">
    <property type="entry name" value="Fumarate reductase respiratory complex transmembrane subunits"/>
    <property type="match status" value="1"/>
</dbReference>
<evidence type="ECO:0000255" key="1">
    <source>
        <dbReference type="HAMAP-Rule" id="MF_00709"/>
    </source>
</evidence>
<gene>
    <name evidence="1" type="primary">frdD</name>
    <name type="ordered locus">ECDH10B_4346</name>
</gene>
<comment type="function">
    <text evidence="1">Two distinct, membrane-bound, FAD-containing enzymes are responsible for the catalysis of fumarate and succinate interconversion; fumarate reductase is used in anaerobic growth, and succinate dehydrogenase is used in aerobic growth. Anchors the catalytic components of the fumarate reductase complex to the cell inner membrane, binds quinones.</text>
</comment>
<comment type="subunit">
    <text evidence="1">Part of an enzyme complex containing four subunits: a flavoprotein (FrdA), an iron-sulfur protein (FrdB), and two hydrophobic anchor proteins (FrdC and FrdD).</text>
</comment>
<comment type="subcellular location">
    <subcellularLocation>
        <location evidence="1">Cell inner membrane</location>
        <topology evidence="1">Multi-pass membrane protein</topology>
    </subcellularLocation>
</comment>
<comment type="similarity">
    <text evidence="1">Belongs to the FrdD family.</text>
</comment>
<protein>
    <recommendedName>
        <fullName evidence="1">Fumarate reductase subunit D</fullName>
    </recommendedName>
    <alternativeName>
        <fullName evidence="1">Fumarate reductase 13 kDa hydrophobic protein</fullName>
    </alternativeName>
    <alternativeName>
        <fullName evidence="1">Quinol-fumarate reductase subunit D</fullName>
        <shortName evidence="1">QFR subunit D</shortName>
    </alternativeName>
</protein>
<proteinExistence type="inferred from homology"/>
<sequence>MINPNPKRSDEPVFWGLFGAGGMWSAIIAPVMILLVGILLPLGLFPGDALSYERVLAFAQSFIGRVFLFLMIVLPLWCGLHRMHHAMHDLKIHVPAGKWVFYGLAAILTVVTLIGVVTI</sequence>
<name>FRDD_ECODH</name>
<feature type="chain" id="PRO_1000132400" description="Fumarate reductase subunit D">
    <location>
        <begin position="1"/>
        <end position="119"/>
    </location>
</feature>
<feature type="transmembrane region" description="Helical" evidence="1">
    <location>
        <begin position="26"/>
        <end position="46"/>
    </location>
</feature>
<feature type="transmembrane region" description="Helical" evidence="1">
    <location>
        <begin position="55"/>
        <end position="75"/>
    </location>
</feature>
<feature type="transmembrane region" description="Helical" evidence="1">
    <location>
        <begin position="99"/>
        <end position="119"/>
    </location>
</feature>
<reference key="1">
    <citation type="journal article" date="2008" name="J. Bacteriol.">
        <title>The complete genome sequence of Escherichia coli DH10B: insights into the biology of a laboratory workhorse.</title>
        <authorList>
            <person name="Durfee T."/>
            <person name="Nelson R."/>
            <person name="Baldwin S."/>
            <person name="Plunkett G. III"/>
            <person name="Burland V."/>
            <person name="Mau B."/>
            <person name="Petrosino J.F."/>
            <person name="Qin X."/>
            <person name="Muzny D.M."/>
            <person name="Ayele M."/>
            <person name="Gibbs R.A."/>
            <person name="Csorgo B."/>
            <person name="Posfai G."/>
            <person name="Weinstock G.M."/>
            <person name="Blattner F.R."/>
        </authorList>
    </citation>
    <scope>NUCLEOTIDE SEQUENCE [LARGE SCALE GENOMIC DNA]</scope>
    <source>
        <strain>K12 / DH10B</strain>
    </source>
</reference>